<organism>
    <name type="scientific">Mus musculus</name>
    <name type="common">Mouse</name>
    <dbReference type="NCBI Taxonomy" id="10090"/>
    <lineage>
        <taxon>Eukaryota</taxon>
        <taxon>Metazoa</taxon>
        <taxon>Chordata</taxon>
        <taxon>Craniata</taxon>
        <taxon>Vertebrata</taxon>
        <taxon>Euteleostomi</taxon>
        <taxon>Mammalia</taxon>
        <taxon>Eutheria</taxon>
        <taxon>Euarchontoglires</taxon>
        <taxon>Glires</taxon>
        <taxon>Rodentia</taxon>
        <taxon>Myomorpha</taxon>
        <taxon>Muroidea</taxon>
        <taxon>Muridae</taxon>
        <taxon>Murinae</taxon>
        <taxon>Mus</taxon>
        <taxon>Mus</taxon>
    </lineage>
</organism>
<proteinExistence type="evidence at protein level"/>
<dbReference type="EC" id="3.1.11.1" evidence="1"/>
<dbReference type="EC" id="3.1.13.-" evidence="1"/>
<dbReference type="EMBL" id="BC018508">
    <property type="protein sequence ID" value="AAH18508.1"/>
    <property type="molecule type" value="mRNA"/>
</dbReference>
<dbReference type="EMBL" id="AK158201">
    <property type="protein sequence ID" value="BAE34403.1"/>
    <property type="molecule type" value="mRNA"/>
</dbReference>
<dbReference type="EMBL" id="AK167692">
    <property type="protein sequence ID" value="BAE39739.1"/>
    <property type="molecule type" value="mRNA"/>
</dbReference>
<dbReference type="EMBL" id="AK162206">
    <property type="protein sequence ID" value="BAE36791.1"/>
    <property type="molecule type" value="mRNA"/>
</dbReference>
<dbReference type="EMBL" id="AK164329">
    <property type="protein sequence ID" value="BAE37741.1"/>
    <property type="molecule type" value="mRNA"/>
</dbReference>
<dbReference type="EMBL" id="AC163282">
    <property type="status" value="NOT_ANNOTATED_CDS"/>
    <property type="molecule type" value="Genomic_DNA"/>
</dbReference>
<dbReference type="CCDS" id="CCDS49098.1">
    <molecule id="Q8VEG4-1"/>
</dbReference>
<dbReference type="RefSeq" id="NP_598559.2">
    <molecule id="Q8VEG4-1"/>
    <property type="nucleotide sequence ID" value="NM_133798.3"/>
</dbReference>
<dbReference type="RefSeq" id="XP_011242528.1">
    <property type="nucleotide sequence ID" value="XM_011244226.2"/>
</dbReference>
<dbReference type="RefSeq" id="XP_030102871.1">
    <molecule id="Q8VEG4-2"/>
    <property type="nucleotide sequence ID" value="XM_030247011.2"/>
</dbReference>
<dbReference type="SMR" id="Q8VEG4"/>
<dbReference type="FunCoup" id="Q8VEG4">
    <property type="interactions" value="2798"/>
</dbReference>
<dbReference type="STRING" id="10090.ENSMUSP00000043049"/>
<dbReference type="iPTMnet" id="Q8VEG4"/>
<dbReference type="PhosphoSitePlus" id="Q8VEG4"/>
<dbReference type="PaxDb" id="10090-ENSMUSP00000043049"/>
<dbReference type="ProteomicsDB" id="275788">
    <molecule id="Q8VEG4-1"/>
</dbReference>
<dbReference type="ProteomicsDB" id="275789">
    <molecule id="Q8VEG4-2"/>
</dbReference>
<dbReference type="Pumba" id="Q8VEG4"/>
<dbReference type="Antibodypedia" id="123">
    <property type="antibodies" value="114 antibodies from 18 providers"/>
</dbReference>
<dbReference type="DNASU" id="97827"/>
<dbReference type="Ensembl" id="ENSMUST00000038185.10">
    <molecule id="Q8VEG4-1"/>
    <property type="protein sequence ID" value="ENSMUSP00000043049.9"/>
    <property type="gene ID" value="ENSMUSG00000032705.10"/>
</dbReference>
<dbReference type="GeneID" id="97827"/>
<dbReference type="KEGG" id="mmu:97827"/>
<dbReference type="UCSC" id="uc007oas.2">
    <property type="organism name" value="mouse"/>
</dbReference>
<dbReference type="AGR" id="MGI:1922485"/>
<dbReference type="CTD" id="55218"/>
<dbReference type="MGI" id="MGI:1922485">
    <property type="gene designation" value="Exd2"/>
</dbReference>
<dbReference type="VEuPathDB" id="HostDB:ENSMUSG00000032705"/>
<dbReference type="eggNOG" id="KOG4373">
    <property type="taxonomic scope" value="Eukaryota"/>
</dbReference>
<dbReference type="GeneTree" id="ENSGT00390000014318"/>
<dbReference type="InParanoid" id="Q8VEG4"/>
<dbReference type="OMA" id="RYYQTPK"/>
<dbReference type="OrthoDB" id="1920326at2759"/>
<dbReference type="PhylomeDB" id="Q8VEG4"/>
<dbReference type="TreeFam" id="TF324246"/>
<dbReference type="BioGRID-ORCS" id="97827">
    <property type="hits" value="1 hit in 112 CRISPR screens"/>
</dbReference>
<dbReference type="ChiTaRS" id="Exd2">
    <property type="organism name" value="mouse"/>
</dbReference>
<dbReference type="PRO" id="PR:Q8VEG4"/>
<dbReference type="Proteomes" id="UP000000589">
    <property type="component" value="Chromosome 12"/>
</dbReference>
<dbReference type="RNAct" id="Q8VEG4">
    <property type="molecule type" value="protein"/>
</dbReference>
<dbReference type="Bgee" id="ENSMUSG00000032705">
    <property type="expression patterns" value="Expressed in spermatocyte and 250 other cell types or tissues"/>
</dbReference>
<dbReference type="ExpressionAtlas" id="Q8VEG4">
    <property type="expression patterns" value="baseline and differential"/>
</dbReference>
<dbReference type="GO" id="GO:0045111">
    <property type="term" value="C:intermediate filament cytoskeleton"/>
    <property type="evidence" value="ECO:0007669"/>
    <property type="project" value="Ensembl"/>
</dbReference>
<dbReference type="GO" id="GO:0005759">
    <property type="term" value="C:mitochondrial matrix"/>
    <property type="evidence" value="ECO:0007669"/>
    <property type="project" value="UniProtKB-SubCell"/>
</dbReference>
<dbReference type="GO" id="GO:0005741">
    <property type="term" value="C:mitochondrial outer membrane"/>
    <property type="evidence" value="ECO:0000250"/>
    <property type="project" value="UniProtKB"/>
</dbReference>
<dbReference type="GO" id="GO:0005634">
    <property type="term" value="C:nucleus"/>
    <property type="evidence" value="ECO:0007669"/>
    <property type="project" value="UniProtKB-SubCell"/>
</dbReference>
<dbReference type="GO" id="GO:0090734">
    <property type="term" value="C:site of DNA damage"/>
    <property type="evidence" value="ECO:0000250"/>
    <property type="project" value="UniProtKB"/>
</dbReference>
<dbReference type="GO" id="GO:0008408">
    <property type="term" value="F:3'-5' exonuclease activity"/>
    <property type="evidence" value="ECO:0000250"/>
    <property type="project" value="UniProtKB"/>
</dbReference>
<dbReference type="GO" id="GO:0008296">
    <property type="term" value="F:3'-5'-DNA exonuclease activity"/>
    <property type="evidence" value="ECO:0000250"/>
    <property type="project" value="UniProtKB"/>
</dbReference>
<dbReference type="GO" id="GO:0000175">
    <property type="term" value="F:3'-5'-RNA exonuclease activity"/>
    <property type="evidence" value="ECO:0000250"/>
    <property type="project" value="UniProtKB"/>
</dbReference>
<dbReference type="GO" id="GO:0000287">
    <property type="term" value="F:magnesium ion binding"/>
    <property type="evidence" value="ECO:0000250"/>
    <property type="project" value="UniProtKB"/>
</dbReference>
<dbReference type="GO" id="GO:0030145">
    <property type="term" value="F:manganese ion binding"/>
    <property type="evidence" value="ECO:0000250"/>
    <property type="project" value="UniProtKB"/>
</dbReference>
<dbReference type="GO" id="GO:0003676">
    <property type="term" value="F:nucleic acid binding"/>
    <property type="evidence" value="ECO:0007669"/>
    <property type="project" value="InterPro"/>
</dbReference>
<dbReference type="GO" id="GO:0042803">
    <property type="term" value="F:protein homodimerization activity"/>
    <property type="evidence" value="ECO:0000250"/>
    <property type="project" value="UniProtKB"/>
</dbReference>
<dbReference type="GO" id="GO:0008310">
    <property type="term" value="F:single-stranded DNA 3'-5' DNA exonuclease activity"/>
    <property type="evidence" value="ECO:0007669"/>
    <property type="project" value="UniProtKB-EC"/>
</dbReference>
<dbReference type="GO" id="GO:0000729">
    <property type="term" value="P:DNA double-strand break processing"/>
    <property type="evidence" value="ECO:0007669"/>
    <property type="project" value="Ensembl"/>
</dbReference>
<dbReference type="GO" id="GO:0000724">
    <property type="term" value="P:double-strand break repair via homologous recombination"/>
    <property type="evidence" value="ECO:0007669"/>
    <property type="project" value="Ensembl"/>
</dbReference>
<dbReference type="GO" id="GO:0031297">
    <property type="term" value="P:replication fork processing"/>
    <property type="evidence" value="ECO:0000250"/>
    <property type="project" value="UniProtKB"/>
</dbReference>
<dbReference type="CDD" id="cd06141">
    <property type="entry name" value="WRN_exo"/>
    <property type="match status" value="1"/>
</dbReference>
<dbReference type="FunFam" id="3.30.420.10:FF:000041">
    <property type="entry name" value="Exonuclease 3'-5' domain containing 2"/>
    <property type="match status" value="1"/>
</dbReference>
<dbReference type="Gene3D" id="3.30.420.10">
    <property type="entry name" value="Ribonuclease H-like superfamily/Ribonuclease H"/>
    <property type="match status" value="1"/>
</dbReference>
<dbReference type="InterPro" id="IPR002562">
    <property type="entry name" value="3'-5'_exonuclease_dom"/>
</dbReference>
<dbReference type="InterPro" id="IPR051132">
    <property type="entry name" value="3-5_Exonuclease_domain"/>
</dbReference>
<dbReference type="InterPro" id="IPR012337">
    <property type="entry name" value="RNaseH-like_sf"/>
</dbReference>
<dbReference type="InterPro" id="IPR036397">
    <property type="entry name" value="RNaseH_sf"/>
</dbReference>
<dbReference type="PANTHER" id="PTHR13620">
    <property type="entry name" value="3-5 EXONUCLEASE"/>
    <property type="match status" value="1"/>
</dbReference>
<dbReference type="PANTHER" id="PTHR13620:SF104">
    <property type="entry name" value="EXONUCLEASE 3'-5' DOMAIN-CONTAINING PROTEIN 2"/>
    <property type="match status" value="1"/>
</dbReference>
<dbReference type="Pfam" id="PF01612">
    <property type="entry name" value="DNA_pol_A_exo1"/>
    <property type="match status" value="1"/>
</dbReference>
<dbReference type="SMART" id="SM00474">
    <property type="entry name" value="35EXOc"/>
    <property type="match status" value="1"/>
</dbReference>
<dbReference type="SUPFAM" id="SSF81995">
    <property type="entry name" value="beta-sandwich domain of Sec23/24"/>
    <property type="match status" value="1"/>
</dbReference>
<dbReference type="SUPFAM" id="SSF53098">
    <property type="entry name" value="Ribonuclease H-like"/>
    <property type="match status" value="1"/>
</dbReference>
<feature type="chain" id="PRO_0000089925" description="Exonuclease 3'-5' domain-containing protein 2">
    <location>
        <begin position="1"/>
        <end position="650"/>
    </location>
</feature>
<feature type="topological domain" description="Mitochondrial intermembrane" evidence="4">
    <location>
        <begin position="1"/>
        <end position="6"/>
    </location>
</feature>
<feature type="transmembrane region" description="Helical" evidence="2">
    <location>
        <begin position="7"/>
        <end position="29"/>
    </location>
</feature>
<feature type="topological domain" description="Cytoplasmic" evidence="4">
    <location>
        <begin position="30"/>
        <end position="650"/>
    </location>
</feature>
<feature type="domain" description="3'-5' exonuclease">
    <location>
        <begin position="184"/>
        <end position="276"/>
    </location>
</feature>
<feature type="region of interest" description="Disordered" evidence="3">
    <location>
        <begin position="34"/>
        <end position="89"/>
    </location>
</feature>
<feature type="region of interest" description="Disordered" evidence="3">
    <location>
        <begin position="340"/>
        <end position="373"/>
    </location>
</feature>
<feature type="compositionally biased region" description="Pro residues" evidence="3">
    <location>
        <begin position="49"/>
        <end position="67"/>
    </location>
</feature>
<feature type="binding site" evidence="1">
    <location>
        <position position="137"/>
    </location>
    <ligand>
        <name>a divalent metal cation</name>
        <dbReference type="ChEBI" id="CHEBI:60240"/>
        <label>1</label>
        <note>catalytic</note>
    </ligand>
</feature>
<feature type="binding site" evidence="1">
    <location>
        <position position="137"/>
    </location>
    <ligand>
        <name>a divalent metal cation</name>
        <dbReference type="ChEBI" id="CHEBI:60240"/>
        <label>2</label>
        <note>catalytic</note>
    </ligand>
</feature>
<feature type="binding site" evidence="1">
    <location>
        <position position="139"/>
    </location>
    <ligand>
        <name>a divalent metal cation</name>
        <dbReference type="ChEBI" id="CHEBI:60240"/>
        <label>1</label>
        <note>catalytic</note>
    </ligand>
</feature>
<feature type="binding site" evidence="1">
    <location>
        <position position="275"/>
    </location>
    <ligand>
        <name>a divalent metal cation</name>
        <dbReference type="ChEBI" id="CHEBI:60240"/>
        <label>1</label>
        <note>catalytic</note>
    </ligand>
</feature>
<feature type="splice variant" id="VSP_058326" description="In isoform 2.">
    <location>
        <begin position="1"/>
        <end position="154"/>
    </location>
</feature>
<feature type="sequence conflict" description="In Ref. 2; BAE37741." evidence="4" ref="2">
    <original>S</original>
    <variation>N</variation>
    <location>
        <position position="257"/>
    </location>
</feature>
<feature type="sequence conflict" description="In Ref. 2; BAE37741." evidence="4" ref="2">
    <original>Q</original>
    <variation>R</variation>
    <location>
        <position position="390"/>
    </location>
</feature>
<accession>Q8VEG4</accession>
<accession>F8WID1</accession>
<accession>Q3TPJ5</accession>
<accession>Q3TS84</accession>
<sequence>MSRQNLVALTVTTLLGVAMGGFVLWKGIQRRWSKTSRVMQQQPQQPQQPQQPQPQPQPQPQPQPEHPQPQQQVPGGREWPPPEDDQLPFGALRAPRASWEERILQAEVVTVSQEAEWNQIQPFLKRELEDFPVLGIDCEWVNLEGKASPLSLLQMASPSGFCALVRLPRLIYGGRTLPRTLLDILADGAILKVGVGCSEDANKLLQDYGLIVRGCLDLRYLAMKQGNNILCNGLSLKSLAETILNFPLDKSLLLRCSNWDAENLTEDQVTYAARDAQISVALFLHLLGYPFSRDSYEEESTDQINWQKALERCRNMVDIPFRSKGLGRLVEEVNGEALESQLKPRNRKAKTDRMVPGNNQGRDPRKHKRKPLGVGYSARKSPLYDNCFLQAPDGQPLCTCDRRKAQWYLDKGIGELVSKEPFVVRLQFEPAGRPESPGDYYLMVKENLCVVCGKTDTYIRKNIIPHEYRKHFPIEMKDHNSHDVLLLCTSCHAISNYYDNHLKQQLAKEFQAPIGSEEGLRLLEDLERRQVRSGARALLNAESLPAHRKEELLHALREFYNTDIITEEMLHEAASLETRIYNESYIPHGLKVVQRHTEGGLRSLMQLESRWRQHFLDSMQPKHLPQQWSVDHNHQKLLRKYGDDLPIKLS</sequence>
<name>EXD2_MOUSE</name>
<comment type="function">
    <text evidence="1">Exonuclease that has both 3'-5' exoribonuclease and exodeoxyribonuclease activities, depending on the divalent metal cation used as cofactor. In presence of Mg(2+), only shows 3'-5' exoribonuclease activity, while it shows both exoribonuclease and exodeoxyribonuclease activities in presence of Mn(2+). Acts as an exoribonuclease in mitochondrion, possibly by regulating ATP production and mitochondrial translation. Also involved in the response to DNA damage. Acts as 3'-5' exodeoxyribonuclease for double-strand breaks resection and efficient homologous recombination. Plays a key role in controlling the initial steps of chromosomal break repair, it is recruited to chromatin in a damage-dependent manner and functionally interacts with the MRN complex to accelerate resection through its 3'-5' exonuclease activity, which efficiently processes double-stranded DNA substrates containing nicks. Also involved in response to replicative stress: recruited to stalled forks and is required to stabilize and restart stalled replication forks by restraining excessive fork regression, thereby suppressing their degradation.</text>
</comment>
<comment type="catalytic activity">
    <reaction evidence="1">
        <text>Exonucleolytic cleavage in the 3'- to 5'-direction to yield nucleoside 5'-phosphates.</text>
        <dbReference type="EC" id="3.1.11.1"/>
    </reaction>
</comment>
<comment type="cofactor">
    <cofactor evidence="1">
        <name>Mg(2+)</name>
        <dbReference type="ChEBI" id="CHEBI:18420"/>
    </cofactor>
    <cofactor evidence="1">
        <name>Mn(2+)</name>
        <dbReference type="ChEBI" id="CHEBI:29035"/>
    </cofactor>
    <text evidence="1">Divalent metal cations; Mg(2+) or Mn(2+). Acts as a 3'-5' exoribonuclease in presence of Mg(2+), while it has no 3'-5' exodeoxyribonuclease activity. Has both as a 3'-5' exoribonuclease and exodeoxyribonuclease activities in presence of Mn(2+).</text>
</comment>
<comment type="subunit">
    <text evidence="1">Homodimer. Interacts with RBBP8, MRE11 and BRCA1.</text>
</comment>
<comment type="subcellular location">
    <subcellularLocation>
        <location evidence="1">Mitochondrion outer membrane</location>
        <topology evidence="1 2">Single-pass membrane protein</topology>
    </subcellularLocation>
    <subcellularLocation>
        <location evidence="1">Mitochondrion matrix</location>
    </subcellularLocation>
    <subcellularLocation>
        <location evidence="1">Nucleus</location>
    </subcellularLocation>
    <subcellularLocation>
        <location evidence="1">Chromosome</location>
    </subcellularLocation>
    <text evidence="1">Mainly localizes to the mitochondrial outer membrane. May translocate to the nucleus in response to DNA damage; however mechanism that explain nuclear localization are unknown and require experimental evidences. Recruited to replication forks following replication stress.</text>
</comment>
<comment type="alternative products">
    <event type="alternative initiation"/>
    <isoform>
        <id>Q8VEG4-1</id>
        <name>1</name>
        <sequence type="displayed"/>
    </isoform>
    <isoform>
        <id>Q8VEG4-2</id>
        <name>2</name>
        <sequence type="described" ref="VSP_058326"/>
    </isoform>
</comment>
<comment type="similarity">
    <text evidence="4">Belongs to the EXD2 family.</text>
</comment>
<evidence type="ECO:0000250" key="1">
    <source>
        <dbReference type="UniProtKB" id="Q9NVH0"/>
    </source>
</evidence>
<evidence type="ECO:0000255" key="2"/>
<evidence type="ECO:0000256" key="3">
    <source>
        <dbReference type="SAM" id="MobiDB-lite"/>
    </source>
</evidence>
<evidence type="ECO:0000305" key="4"/>
<evidence type="ECO:0000312" key="5">
    <source>
        <dbReference type="EMBL" id="BAE36791.1"/>
    </source>
</evidence>
<evidence type="ECO:0000312" key="6">
    <source>
        <dbReference type="MGI" id="MGI:1922485"/>
    </source>
</evidence>
<gene>
    <name evidence="6" type="primary">Exd2</name>
    <name evidence="6" type="synonym">Exdl2</name>
</gene>
<keyword id="KW-0024">Alternative initiation</keyword>
<keyword id="KW-0158">Chromosome</keyword>
<keyword id="KW-0227">DNA damage</keyword>
<keyword id="KW-0234">DNA repair</keyword>
<keyword id="KW-0269">Exonuclease</keyword>
<keyword id="KW-0378">Hydrolase</keyword>
<keyword id="KW-0460">Magnesium</keyword>
<keyword id="KW-0464">Manganese</keyword>
<keyword id="KW-0472">Membrane</keyword>
<keyword id="KW-0479">Metal-binding</keyword>
<keyword id="KW-0496">Mitochondrion</keyword>
<keyword id="KW-1000">Mitochondrion outer membrane</keyword>
<keyword id="KW-0540">Nuclease</keyword>
<keyword id="KW-0539">Nucleus</keyword>
<keyword id="KW-1185">Reference proteome</keyword>
<keyword id="KW-0812">Transmembrane</keyword>
<keyword id="KW-1133">Transmembrane helix</keyword>
<reference key="1">
    <citation type="journal article" date="2004" name="Genome Res.">
        <title>The status, quality, and expansion of the NIH full-length cDNA project: the Mammalian Gene Collection (MGC).</title>
        <authorList>
            <consortium name="The MGC Project Team"/>
        </authorList>
    </citation>
    <scope>NUCLEOTIDE SEQUENCE [LARGE SCALE MRNA] (ISOFORM 2)</scope>
    <source>
        <tissue>Mammary tumor</tissue>
    </source>
</reference>
<reference key="2">
    <citation type="journal article" date="2005" name="Science">
        <title>The transcriptional landscape of the mammalian genome.</title>
        <authorList>
            <person name="Carninci P."/>
            <person name="Kasukawa T."/>
            <person name="Katayama S."/>
            <person name="Gough J."/>
            <person name="Frith M.C."/>
            <person name="Maeda N."/>
            <person name="Oyama R."/>
            <person name="Ravasi T."/>
            <person name="Lenhard B."/>
            <person name="Wells C."/>
            <person name="Kodzius R."/>
            <person name="Shimokawa K."/>
            <person name="Bajic V.B."/>
            <person name="Brenner S.E."/>
            <person name="Batalov S."/>
            <person name="Forrest A.R."/>
            <person name="Zavolan M."/>
            <person name="Davis M.J."/>
            <person name="Wilming L.G."/>
            <person name="Aidinis V."/>
            <person name="Allen J.E."/>
            <person name="Ambesi-Impiombato A."/>
            <person name="Apweiler R."/>
            <person name="Aturaliya R.N."/>
            <person name="Bailey T.L."/>
            <person name="Bansal M."/>
            <person name="Baxter L."/>
            <person name="Beisel K.W."/>
            <person name="Bersano T."/>
            <person name="Bono H."/>
            <person name="Chalk A.M."/>
            <person name="Chiu K.P."/>
            <person name="Choudhary V."/>
            <person name="Christoffels A."/>
            <person name="Clutterbuck D.R."/>
            <person name="Crowe M.L."/>
            <person name="Dalla E."/>
            <person name="Dalrymple B.P."/>
            <person name="de Bono B."/>
            <person name="Della Gatta G."/>
            <person name="di Bernardo D."/>
            <person name="Down T."/>
            <person name="Engstrom P."/>
            <person name="Fagiolini M."/>
            <person name="Faulkner G."/>
            <person name="Fletcher C.F."/>
            <person name="Fukushima T."/>
            <person name="Furuno M."/>
            <person name="Futaki S."/>
            <person name="Gariboldi M."/>
            <person name="Georgii-Hemming P."/>
            <person name="Gingeras T.R."/>
            <person name="Gojobori T."/>
            <person name="Green R.E."/>
            <person name="Gustincich S."/>
            <person name="Harbers M."/>
            <person name="Hayashi Y."/>
            <person name="Hensch T.K."/>
            <person name="Hirokawa N."/>
            <person name="Hill D."/>
            <person name="Huminiecki L."/>
            <person name="Iacono M."/>
            <person name="Ikeo K."/>
            <person name="Iwama A."/>
            <person name="Ishikawa T."/>
            <person name="Jakt M."/>
            <person name="Kanapin A."/>
            <person name="Katoh M."/>
            <person name="Kawasawa Y."/>
            <person name="Kelso J."/>
            <person name="Kitamura H."/>
            <person name="Kitano H."/>
            <person name="Kollias G."/>
            <person name="Krishnan S.P."/>
            <person name="Kruger A."/>
            <person name="Kummerfeld S.K."/>
            <person name="Kurochkin I.V."/>
            <person name="Lareau L.F."/>
            <person name="Lazarevic D."/>
            <person name="Lipovich L."/>
            <person name="Liu J."/>
            <person name="Liuni S."/>
            <person name="McWilliam S."/>
            <person name="Madan Babu M."/>
            <person name="Madera M."/>
            <person name="Marchionni L."/>
            <person name="Matsuda H."/>
            <person name="Matsuzawa S."/>
            <person name="Miki H."/>
            <person name="Mignone F."/>
            <person name="Miyake S."/>
            <person name="Morris K."/>
            <person name="Mottagui-Tabar S."/>
            <person name="Mulder N."/>
            <person name="Nakano N."/>
            <person name="Nakauchi H."/>
            <person name="Ng P."/>
            <person name="Nilsson R."/>
            <person name="Nishiguchi S."/>
            <person name="Nishikawa S."/>
            <person name="Nori F."/>
            <person name="Ohara O."/>
            <person name="Okazaki Y."/>
            <person name="Orlando V."/>
            <person name="Pang K.C."/>
            <person name="Pavan W.J."/>
            <person name="Pavesi G."/>
            <person name="Pesole G."/>
            <person name="Petrovsky N."/>
            <person name="Piazza S."/>
            <person name="Reed J."/>
            <person name="Reid J.F."/>
            <person name="Ring B.Z."/>
            <person name="Ringwald M."/>
            <person name="Rost B."/>
            <person name="Ruan Y."/>
            <person name="Salzberg S.L."/>
            <person name="Sandelin A."/>
            <person name="Schneider C."/>
            <person name="Schoenbach C."/>
            <person name="Sekiguchi K."/>
            <person name="Semple C.A."/>
            <person name="Seno S."/>
            <person name="Sessa L."/>
            <person name="Sheng Y."/>
            <person name="Shibata Y."/>
            <person name="Shimada H."/>
            <person name="Shimada K."/>
            <person name="Silva D."/>
            <person name="Sinclair B."/>
            <person name="Sperling S."/>
            <person name="Stupka E."/>
            <person name="Sugiura K."/>
            <person name="Sultana R."/>
            <person name="Takenaka Y."/>
            <person name="Taki K."/>
            <person name="Tammoja K."/>
            <person name="Tan S.L."/>
            <person name="Tang S."/>
            <person name="Taylor M.S."/>
            <person name="Tegner J."/>
            <person name="Teichmann S.A."/>
            <person name="Ueda H.R."/>
            <person name="van Nimwegen E."/>
            <person name="Verardo R."/>
            <person name="Wei C.L."/>
            <person name="Yagi K."/>
            <person name="Yamanishi H."/>
            <person name="Zabarovsky E."/>
            <person name="Zhu S."/>
            <person name="Zimmer A."/>
            <person name="Hide W."/>
            <person name="Bult C."/>
            <person name="Grimmond S.M."/>
            <person name="Teasdale R.D."/>
            <person name="Liu E.T."/>
            <person name="Brusic V."/>
            <person name="Quackenbush J."/>
            <person name="Wahlestedt C."/>
            <person name="Mattick J.S."/>
            <person name="Hume D.A."/>
            <person name="Kai C."/>
            <person name="Sasaki D."/>
            <person name="Tomaru Y."/>
            <person name="Fukuda S."/>
            <person name="Kanamori-Katayama M."/>
            <person name="Suzuki M."/>
            <person name="Aoki J."/>
            <person name="Arakawa T."/>
            <person name="Iida J."/>
            <person name="Imamura K."/>
            <person name="Itoh M."/>
            <person name="Kato T."/>
            <person name="Kawaji H."/>
            <person name="Kawagashira N."/>
            <person name="Kawashima T."/>
            <person name="Kojima M."/>
            <person name="Kondo S."/>
            <person name="Konno H."/>
            <person name="Nakano K."/>
            <person name="Ninomiya N."/>
            <person name="Nishio T."/>
            <person name="Okada M."/>
            <person name="Plessy C."/>
            <person name="Shibata K."/>
            <person name="Shiraki T."/>
            <person name="Suzuki S."/>
            <person name="Tagami M."/>
            <person name="Waki K."/>
            <person name="Watahiki A."/>
            <person name="Okamura-Oho Y."/>
            <person name="Suzuki H."/>
            <person name="Kawai J."/>
            <person name="Hayashizaki Y."/>
        </authorList>
    </citation>
    <scope>NUCLEOTIDE SEQUENCE [LARGE SCALE MRNA] (ISOFORMS 1 AND 2)</scope>
    <source>
        <strain evidence="5">C57BL/6J</strain>
    </source>
</reference>
<reference key="3">
    <citation type="journal article" date="2009" name="PLoS Biol.">
        <title>Lineage-specific biology revealed by a finished genome assembly of the mouse.</title>
        <authorList>
            <person name="Church D.M."/>
            <person name="Goodstadt L."/>
            <person name="Hillier L.W."/>
            <person name="Zody M.C."/>
            <person name="Goldstein S."/>
            <person name="She X."/>
            <person name="Bult C.J."/>
            <person name="Agarwala R."/>
            <person name="Cherry J.L."/>
            <person name="DiCuccio M."/>
            <person name="Hlavina W."/>
            <person name="Kapustin Y."/>
            <person name="Meric P."/>
            <person name="Maglott D."/>
            <person name="Birtle Z."/>
            <person name="Marques A.C."/>
            <person name="Graves T."/>
            <person name="Zhou S."/>
            <person name="Teague B."/>
            <person name="Potamousis K."/>
            <person name="Churas C."/>
            <person name="Place M."/>
            <person name="Herschleb J."/>
            <person name="Runnheim R."/>
            <person name="Forrest D."/>
            <person name="Amos-Landgraf J."/>
            <person name="Schwartz D.C."/>
            <person name="Cheng Z."/>
            <person name="Lindblad-Toh K."/>
            <person name="Eichler E.E."/>
            <person name="Ponting C.P."/>
        </authorList>
    </citation>
    <scope>NUCLEOTIDE SEQUENCE [LARGE SCALE GENOMIC DNA]</scope>
    <source>
        <strain>C57BL/6J</strain>
    </source>
</reference>
<reference key="4">
    <citation type="journal article" date="2010" name="Cell">
        <title>A tissue-specific atlas of mouse protein phosphorylation and expression.</title>
        <authorList>
            <person name="Huttlin E.L."/>
            <person name="Jedrychowski M.P."/>
            <person name="Elias J.E."/>
            <person name="Goswami T."/>
            <person name="Rad R."/>
            <person name="Beausoleil S.A."/>
            <person name="Villen J."/>
            <person name="Haas W."/>
            <person name="Sowa M.E."/>
            <person name="Gygi S.P."/>
        </authorList>
    </citation>
    <scope>IDENTIFICATION BY MASS SPECTROMETRY [LARGE SCALE ANALYSIS]</scope>
    <source>
        <tissue>Spleen</tissue>
        <tissue>Testis</tissue>
    </source>
</reference>
<protein>
    <recommendedName>
        <fullName evidence="4">Exonuclease 3'-5' domain-containing protein 2</fullName>
        <ecNumber evidence="1">3.1.11.1</ecNumber>
    </recommendedName>
    <alternativeName>
        <fullName evidence="4">3'-5' exoribonuclease EXD2</fullName>
        <ecNumber evidence="1">3.1.13.-</ecNumber>
    </alternativeName>
    <alternativeName>
        <fullName evidence="4">Exonuclease 3'-5' domain-like-containing protein 2</fullName>
    </alternativeName>
</protein>